<dbReference type="EC" id="3.4.24.-" evidence="1"/>
<dbReference type="EMBL" id="CP000687">
    <property type="protein sequence ID" value="ABY69613.1"/>
    <property type="molecule type" value="Genomic_DNA"/>
</dbReference>
<dbReference type="RefSeq" id="WP_005604779.1">
    <property type="nucleotide sequence ID" value="NC_010278.1"/>
</dbReference>
<dbReference type="SMR" id="B0BPX8"/>
<dbReference type="MEROPS" id="M48.002"/>
<dbReference type="GeneID" id="48599266"/>
<dbReference type="KEGG" id="apj:APJL_1057"/>
<dbReference type="HOGENOM" id="CLU_042266_1_0_6"/>
<dbReference type="Proteomes" id="UP000008547">
    <property type="component" value="Chromosome"/>
</dbReference>
<dbReference type="GO" id="GO:0005886">
    <property type="term" value="C:plasma membrane"/>
    <property type="evidence" value="ECO:0007669"/>
    <property type="project" value="UniProtKB-SubCell"/>
</dbReference>
<dbReference type="GO" id="GO:0004222">
    <property type="term" value="F:metalloendopeptidase activity"/>
    <property type="evidence" value="ECO:0007669"/>
    <property type="project" value="UniProtKB-UniRule"/>
</dbReference>
<dbReference type="GO" id="GO:0008270">
    <property type="term" value="F:zinc ion binding"/>
    <property type="evidence" value="ECO:0007669"/>
    <property type="project" value="UniProtKB-UniRule"/>
</dbReference>
<dbReference type="GO" id="GO:0006508">
    <property type="term" value="P:proteolysis"/>
    <property type="evidence" value="ECO:0007669"/>
    <property type="project" value="UniProtKB-KW"/>
</dbReference>
<dbReference type="CDD" id="cd07335">
    <property type="entry name" value="M48B_HtpX_like"/>
    <property type="match status" value="1"/>
</dbReference>
<dbReference type="FunFam" id="3.30.2010.10:FF:000001">
    <property type="entry name" value="Protease HtpX"/>
    <property type="match status" value="1"/>
</dbReference>
<dbReference type="Gene3D" id="3.30.2010.10">
    <property type="entry name" value="Metalloproteases ('zincins'), catalytic domain"/>
    <property type="match status" value="1"/>
</dbReference>
<dbReference type="HAMAP" id="MF_00188">
    <property type="entry name" value="Pept_M48_protease_HtpX"/>
    <property type="match status" value="1"/>
</dbReference>
<dbReference type="InterPro" id="IPR050083">
    <property type="entry name" value="HtpX_protease"/>
</dbReference>
<dbReference type="InterPro" id="IPR022919">
    <property type="entry name" value="Pept_M48_protease_HtpX"/>
</dbReference>
<dbReference type="InterPro" id="IPR001915">
    <property type="entry name" value="Peptidase_M48"/>
</dbReference>
<dbReference type="NCBIfam" id="NF003965">
    <property type="entry name" value="PRK05457.1"/>
    <property type="match status" value="1"/>
</dbReference>
<dbReference type="PANTHER" id="PTHR43221">
    <property type="entry name" value="PROTEASE HTPX"/>
    <property type="match status" value="1"/>
</dbReference>
<dbReference type="PANTHER" id="PTHR43221:SF1">
    <property type="entry name" value="PROTEASE HTPX"/>
    <property type="match status" value="1"/>
</dbReference>
<dbReference type="Pfam" id="PF01435">
    <property type="entry name" value="Peptidase_M48"/>
    <property type="match status" value="1"/>
</dbReference>
<protein>
    <recommendedName>
        <fullName evidence="1">Protease HtpX</fullName>
        <ecNumber evidence="1">3.4.24.-</ecNumber>
    </recommendedName>
    <alternativeName>
        <fullName evidence="1">Heat shock protein HtpX</fullName>
    </alternativeName>
</protein>
<reference key="1">
    <citation type="journal article" date="2008" name="PLoS ONE">
        <title>Genome biology of Actinobacillus pleuropneumoniae JL03, an isolate of serotype 3 prevalent in China.</title>
        <authorList>
            <person name="Xu Z."/>
            <person name="Zhou Y."/>
            <person name="Li L."/>
            <person name="Zhou R."/>
            <person name="Xiao S."/>
            <person name="Wan Y."/>
            <person name="Zhang S."/>
            <person name="Wang K."/>
            <person name="Li W."/>
            <person name="Li L."/>
            <person name="Jin H."/>
            <person name="Kang M."/>
            <person name="Dalai B."/>
            <person name="Li T."/>
            <person name="Liu L."/>
            <person name="Cheng Y."/>
            <person name="Zhang L."/>
            <person name="Xu T."/>
            <person name="Zheng H."/>
            <person name="Pu S."/>
            <person name="Wang B."/>
            <person name="Gu W."/>
            <person name="Zhang X.L."/>
            <person name="Zhu G.-F."/>
            <person name="Wang S."/>
            <person name="Zhao G.-P."/>
            <person name="Chen H."/>
        </authorList>
    </citation>
    <scope>NUCLEOTIDE SEQUENCE [LARGE SCALE GENOMIC DNA]</scope>
    <source>
        <strain>JL03</strain>
    </source>
</reference>
<feature type="chain" id="PRO_1000098803" description="Protease HtpX">
    <location>
        <begin position="1"/>
        <end position="289"/>
    </location>
</feature>
<feature type="transmembrane region" description="Helical" evidence="1">
    <location>
        <begin position="7"/>
        <end position="27"/>
    </location>
</feature>
<feature type="transmembrane region" description="Helical" evidence="1">
    <location>
        <begin position="38"/>
        <end position="58"/>
    </location>
</feature>
<feature type="transmembrane region" description="Helical" evidence="1">
    <location>
        <begin position="155"/>
        <end position="175"/>
    </location>
</feature>
<feature type="transmembrane region" description="Helical" evidence="1">
    <location>
        <begin position="194"/>
        <end position="214"/>
    </location>
</feature>
<feature type="active site" evidence="1">
    <location>
        <position position="145"/>
    </location>
</feature>
<feature type="binding site" evidence="1">
    <location>
        <position position="144"/>
    </location>
    <ligand>
        <name>Zn(2+)</name>
        <dbReference type="ChEBI" id="CHEBI:29105"/>
        <note>catalytic</note>
    </ligand>
</feature>
<feature type="binding site" evidence="1">
    <location>
        <position position="148"/>
    </location>
    <ligand>
        <name>Zn(2+)</name>
        <dbReference type="ChEBI" id="CHEBI:29105"/>
        <note>catalytic</note>
    </ligand>
</feature>
<feature type="binding site" evidence="1">
    <location>
        <position position="223"/>
    </location>
    <ligand>
        <name>Zn(2+)</name>
        <dbReference type="ChEBI" id="CHEBI:29105"/>
        <note>catalytic</note>
    </ligand>
</feature>
<keyword id="KW-0997">Cell inner membrane</keyword>
<keyword id="KW-1003">Cell membrane</keyword>
<keyword id="KW-0378">Hydrolase</keyword>
<keyword id="KW-0472">Membrane</keyword>
<keyword id="KW-0479">Metal-binding</keyword>
<keyword id="KW-0482">Metalloprotease</keyword>
<keyword id="KW-0645">Protease</keyword>
<keyword id="KW-0812">Transmembrane</keyword>
<keyword id="KW-1133">Transmembrane helix</keyword>
<keyword id="KW-0862">Zinc</keyword>
<gene>
    <name evidence="1" type="primary">htpX</name>
    <name type="ordered locus">APJL_1057</name>
</gene>
<accession>B0BPX8</accession>
<sequence>MAKRIVLFLLTNLAITFVLGIVLNIIFQVTGIQGGSTGGILVMSLVFGFAGSLISLFMSKSMALRSVGAEVIQQPRNHAEQWLFDTVQRQSQQANIPMPDIAIYHSADVNAFATGATKNNSLVAVSTGLLDNMTEDEAEAVVAHEIAHIANGDMVTMTLLQGVLNTFVIFLSRIISTAASSGKDENGNATQNTLVFWIVDIALQMIFGVIATMIAMWFSRYREYRADAGSAQLVGKEKMIAALQRLQHVHEPQEMQGSLAAFMINGARSKELFMSHPPLEKRIEALRNL</sequence>
<evidence type="ECO:0000255" key="1">
    <source>
        <dbReference type="HAMAP-Rule" id="MF_00188"/>
    </source>
</evidence>
<comment type="cofactor">
    <cofactor evidence="1">
        <name>Zn(2+)</name>
        <dbReference type="ChEBI" id="CHEBI:29105"/>
    </cofactor>
    <text evidence="1">Binds 1 zinc ion per subunit.</text>
</comment>
<comment type="subcellular location">
    <subcellularLocation>
        <location evidence="1">Cell inner membrane</location>
        <topology evidence="1">Multi-pass membrane protein</topology>
    </subcellularLocation>
</comment>
<comment type="similarity">
    <text evidence="1">Belongs to the peptidase M48B family.</text>
</comment>
<organism>
    <name type="scientific">Actinobacillus pleuropneumoniae serotype 3 (strain JL03)</name>
    <dbReference type="NCBI Taxonomy" id="434271"/>
    <lineage>
        <taxon>Bacteria</taxon>
        <taxon>Pseudomonadati</taxon>
        <taxon>Pseudomonadota</taxon>
        <taxon>Gammaproteobacteria</taxon>
        <taxon>Pasteurellales</taxon>
        <taxon>Pasteurellaceae</taxon>
        <taxon>Actinobacillus</taxon>
    </lineage>
</organism>
<proteinExistence type="inferred from homology"/>
<name>HTPX_ACTPJ</name>